<gene>
    <name evidence="4" type="primary">TAF11L9</name>
</gene>
<sequence>METGRQTGVSAEMLAMPRGLKGSKKDGIPEDLDGNLEAPRDQEGELRSEDVMDLTEGDSEASASAPPAAKRRKTHTKGKKESKPTVDAEEAQRMTTLLSAMSEEQLSRYEVCRRSAFPRARVAGLMRAITGSSVSENAAIAMAGIAKLFVGEVVEEALDVCEMWGETPPLQPKHLREAVRRLKPKGLFPNSNCRRIMF</sequence>
<feature type="chain" id="PRO_0000456149" description="TATA-box-binding protein-associated factor 11-like protein 9">
    <location>
        <begin position="1"/>
        <end position="198"/>
    </location>
</feature>
<feature type="region of interest" description="Disordered" evidence="1">
    <location>
        <begin position="1"/>
        <end position="90"/>
    </location>
</feature>
<feature type="compositionally biased region" description="Basic and acidic residues" evidence="1">
    <location>
        <begin position="38"/>
        <end position="50"/>
    </location>
</feature>
<feature type="compositionally biased region" description="Basic residues" evidence="1">
    <location>
        <begin position="69"/>
        <end position="78"/>
    </location>
</feature>
<feature type="compositionally biased region" description="Basic and acidic residues" evidence="1">
    <location>
        <begin position="79"/>
        <end position="90"/>
    </location>
</feature>
<evidence type="ECO:0000256" key="1">
    <source>
        <dbReference type="SAM" id="MobiDB-lite"/>
    </source>
</evidence>
<evidence type="ECO:0000269" key="2">
    <source>
    </source>
</evidence>
<evidence type="ECO:0000305" key="3"/>
<evidence type="ECO:0000312" key="4">
    <source>
        <dbReference type="HGNC" id="HGNC:53852"/>
    </source>
</evidence>
<keyword id="KW-1185">Reference proteome</keyword>
<reference key="1">
    <citation type="journal article" date="2004" name="Nature">
        <title>The DNA sequence and comparative analysis of human chromosome 5.</title>
        <authorList>
            <person name="Schmutz J."/>
            <person name="Martin J."/>
            <person name="Terry A."/>
            <person name="Couronne O."/>
            <person name="Grimwood J."/>
            <person name="Lowry S."/>
            <person name="Gordon L.A."/>
            <person name="Scott D."/>
            <person name="Xie G."/>
            <person name="Huang W."/>
            <person name="Hellsten U."/>
            <person name="Tran-Gyamfi M."/>
            <person name="She X."/>
            <person name="Prabhakar S."/>
            <person name="Aerts A."/>
            <person name="Altherr M."/>
            <person name="Bajorek E."/>
            <person name="Black S."/>
            <person name="Branscomb E."/>
            <person name="Caoile C."/>
            <person name="Challacombe J.F."/>
            <person name="Chan Y.M."/>
            <person name="Denys M."/>
            <person name="Detter J.C."/>
            <person name="Escobar J."/>
            <person name="Flowers D."/>
            <person name="Fotopulos D."/>
            <person name="Glavina T."/>
            <person name="Gomez M."/>
            <person name="Gonzales E."/>
            <person name="Goodstein D."/>
            <person name="Grigoriev I."/>
            <person name="Groza M."/>
            <person name="Hammon N."/>
            <person name="Hawkins T."/>
            <person name="Haydu L."/>
            <person name="Israni S."/>
            <person name="Jett J."/>
            <person name="Kadner K."/>
            <person name="Kimball H."/>
            <person name="Kobayashi A."/>
            <person name="Lopez F."/>
            <person name="Lou Y."/>
            <person name="Martinez D."/>
            <person name="Medina C."/>
            <person name="Morgan J."/>
            <person name="Nandkeshwar R."/>
            <person name="Noonan J.P."/>
            <person name="Pitluck S."/>
            <person name="Pollard M."/>
            <person name="Predki P."/>
            <person name="Priest J."/>
            <person name="Ramirez L."/>
            <person name="Retterer J."/>
            <person name="Rodriguez A."/>
            <person name="Rogers S."/>
            <person name="Salamov A."/>
            <person name="Salazar A."/>
            <person name="Thayer N."/>
            <person name="Tice H."/>
            <person name="Tsai M."/>
            <person name="Ustaszewska A."/>
            <person name="Vo N."/>
            <person name="Wheeler J."/>
            <person name="Wu K."/>
            <person name="Yang J."/>
            <person name="Dickson M."/>
            <person name="Cheng J.-F."/>
            <person name="Eichler E.E."/>
            <person name="Olsen A."/>
            <person name="Pennacchio L.A."/>
            <person name="Rokhsar D.S."/>
            <person name="Richardson P."/>
            <person name="Lucas S.M."/>
            <person name="Myers R.M."/>
            <person name="Rubin E.M."/>
        </authorList>
    </citation>
    <scope>NUCLEOTIDE SEQUENCE [LARGE SCALE GENOMIC DNA]</scope>
</reference>
<reference key="2">
    <citation type="journal article" date="2010" name="BMC Genomics">
        <title>Expression, tandem repeat copy number variation and stability of four macrosatellite arrays in the human genome.</title>
        <authorList>
            <person name="Tremblay D.C."/>
            <person name="Alexander G. Jr."/>
            <person name="Moseley S."/>
            <person name="Chadwick B.P."/>
        </authorList>
    </citation>
    <scope>TISSUE SPECIFICITY</scope>
</reference>
<name>TFKL9_HUMAN</name>
<dbReference type="EMBL" id="AC233724">
    <property type="status" value="NOT_ANNOTATED_CDS"/>
    <property type="molecule type" value="Genomic_DNA"/>
</dbReference>
<dbReference type="CCDS" id="CCDS93695.1"/>
<dbReference type="RefSeq" id="NP_001388622.1">
    <property type="nucleotide sequence ID" value="NM_001401693.1"/>
</dbReference>
<dbReference type="SMR" id="A0A1W2PR64"/>
<dbReference type="FunCoup" id="A0A1W2PR64">
    <property type="interactions" value="61"/>
</dbReference>
<dbReference type="STRING" id="9606.ENSP00000492463"/>
<dbReference type="BioMuta" id="ENSG00000283988"/>
<dbReference type="MassIVE" id="A0A1W2PR64"/>
<dbReference type="PeptideAtlas" id="A0A1W2PR64"/>
<dbReference type="Ensembl" id="ENST00000639969.1">
    <property type="protein sequence ID" value="ENSP00000492463.1"/>
    <property type="gene ID" value="ENSG00000283988.1"/>
</dbReference>
<dbReference type="GeneID" id="112488745"/>
<dbReference type="MANE-Select" id="ENST00000639969.1">
    <property type="protein sequence ID" value="ENSP00000492463.1"/>
    <property type="RefSeq nucleotide sequence ID" value="NM_001401693.1"/>
    <property type="RefSeq protein sequence ID" value="NP_001388622.1"/>
</dbReference>
<dbReference type="AGR" id="HGNC:53852"/>
<dbReference type="GeneCards" id="TAF11L9"/>
<dbReference type="HGNC" id="HGNC:53852">
    <property type="gene designation" value="TAF11L9"/>
</dbReference>
<dbReference type="HPA" id="ENSG00000283988">
    <property type="expression patterns" value="Not detected"/>
</dbReference>
<dbReference type="VEuPathDB" id="HostDB:ENSG00000283988"/>
<dbReference type="GeneTree" id="ENSGT00390000013228"/>
<dbReference type="InParanoid" id="A0A1W2PR64"/>
<dbReference type="OMA" id="ENTAIVM"/>
<dbReference type="PAN-GO" id="A0A1W2PR64">
    <property type="GO annotations" value="3 GO annotations based on evolutionary models"/>
</dbReference>
<dbReference type="PRO" id="PR:A0A1W2PR64"/>
<dbReference type="Proteomes" id="UP000005640">
    <property type="component" value="Chromosome 5"/>
</dbReference>
<dbReference type="RNAct" id="A0A1W2PR64">
    <property type="molecule type" value="protein"/>
</dbReference>
<dbReference type="Bgee" id="ENSG00000283988">
    <property type="expression patterns" value="Expressed in primordial germ cell in gonad and 2 other cell types or tissues"/>
</dbReference>
<dbReference type="GO" id="GO:0005669">
    <property type="term" value="C:transcription factor TFIID complex"/>
    <property type="evidence" value="ECO:0000318"/>
    <property type="project" value="GO_Central"/>
</dbReference>
<dbReference type="GO" id="GO:0046982">
    <property type="term" value="F:protein heterodimerization activity"/>
    <property type="evidence" value="ECO:0007669"/>
    <property type="project" value="InterPro"/>
</dbReference>
<dbReference type="GO" id="GO:0051123">
    <property type="term" value="P:RNA polymerase II preinitiation complex assembly"/>
    <property type="evidence" value="ECO:0000318"/>
    <property type="project" value="GO_Central"/>
</dbReference>
<dbReference type="CDD" id="cd08048">
    <property type="entry name" value="HFD_TAF11"/>
    <property type="match status" value="1"/>
</dbReference>
<dbReference type="FunFam" id="1.10.20.10:FF:000025">
    <property type="entry name" value="Transcription initiation factor TFIID subunit 11"/>
    <property type="match status" value="1"/>
</dbReference>
<dbReference type="Gene3D" id="1.10.20.10">
    <property type="entry name" value="Histone, subunit A"/>
    <property type="match status" value="1"/>
</dbReference>
<dbReference type="InterPro" id="IPR009072">
    <property type="entry name" value="Histone-fold"/>
</dbReference>
<dbReference type="InterPro" id="IPR045127">
    <property type="entry name" value="TAF11-like"/>
</dbReference>
<dbReference type="InterPro" id="IPR006809">
    <property type="entry name" value="TAFII28_dom"/>
</dbReference>
<dbReference type="PANTHER" id="PTHR13218:SF18">
    <property type="entry name" value="TATA-BOX-BINDING PROTEIN-ASSOCIATED FACTOR 11-LIKE PROTEIN 10-RELATED"/>
    <property type="match status" value="1"/>
</dbReference>
<dbReference type="PANTHER" id="PTHR13218">
    <property type="entry name" value="TRANSCRIPTION INITIATION FACTOR TFIID SUBUNIT 11-RELATED"/>
    <property type="match status" value="1"/>
</dbReference>
<dbReference type="Pfam" id="PF04719">
    <property type="entry name" value="TAFII28"/>
    <property type="match status" value="1"/>
</dbReference>
<dbReference type="SUPFAM" id="SSF47113">
    <property type="entry name" value="Histone-fold"/>
    <property type="match status" value="1"/>
</dbReference>
<protein>
    <recommendedName>
        <fullName evidence="3">TATA-box-binding protein-associated factor 11-like protein 9</fullName>
    </recommendedName>
</protein>
<accession>A0A1W2PR64</accession>
<proteinExistence type="evidence at transcript level"/>
<comment type="tissue specificity">
    <text evidence="2">Expressed in fetal brain and testis.</text>
</comment>
<comment type="similarity">
    <text evidence="3">Belongs to the TAF11 family.</text>
</comment>
<organism>
    <name type="scientific">Homo sapiens</name>
    <name type="common">Human</name>
    <dbReference type="NCBI Taxonomy" id="9606"/>
    <lineage>
        <taxon>Eukaryota</taxon>
        <taxon>Metazoa</taxon>
        <taxon>Chordata</taxon>
        <taxon>Craniata</taxon>
        <taxon>Vertebrata</taxon>
        <taxon>Euteleostomi</taxon>
        <taxon>Mammalia</taxon>
        <taxon>Eutheria</taxon>
        <taxon>Euarchontoglires</taxon>
        <taxon>Primates</taxon>
        <taxon>Haplorrhini</taxon>
        <taxon>Catarrhini</taxon>
        <taxon>Hominidae</taxon>
        <taxon>Homo</taxon>
    </lineage>
</organism>